<proteinExistence type="inferred from homology"/>
<dbReference type="EC" id="3.6.5.n1" evidence="1"/>
<dbReference type="EMBL" id="CP000766">
    <property type="protein sequence ID" value="ABY72331.1"/>
    <property type="molecule type" value="Genomic_DNA"/>
</dbReference>
<dbReference type="RefSeq" id="WP_012150581.1">
    <property type="nucleotide sequence ID" value="NC_010263.3"/>
</dbReference>
<dbReference type="SMR" id="B0BWV5"/>
<dbReference type="GeneID" id="79937143"/>
<dbReference type="KEGG" id="rrj:RrIowa_0443"/>
<dbReference type="eggNOG" id="COG0481">
    <property type="taxonomic scope" value="Bacteria"/>
</dbReference>
<dbReference type="HOGENOM" id="CLU_009995_3_3_5"/>
<dbReference type="Proteomes" id="UP000000796">
    <property type="component" value="Chromosome"/>
</dbReference>
<dbReference type="GO" id="GO:0005886">
    <property type="term" value="C:plasma membrane"/>
    <property type="evidence" value="ECO:0007669"/>
    <property type="project" value="UniProtKB-SubCell"/>
</dbReference>
<dbReference type="GO" id="GO:0005525">
    <property type="term" value="F:GTP binding"/>
    <property type="evidence" value="ECO:0007669"/>
    <property type="project" value="UniProtKB-UniRule"/>
</dbReference>
<dbReference type="GO" id="GO:0003924">
    <property type="term" value="F:GTPase activity"/>
    <property type="evidence" value="ECO:0007669"/>
    <property type="project" value="UniProtKB-UniRule"/>
</dbReference>
<dbReference type="GO" id="GO:0097216">
    <property type="term" value="F:guanosine tetraphosphate binding"/>
    <property type="evidence" value="ECO:0007669"/>
    <property type="project" value="UniProtKB-ARBA"/>
</dbReference>
<dbReference type="GO" id="GO:0043022">
    <property type="term" value="F:ribosome binding"/>
    <property type="evidence" value="ECO:0007669"/>
    <property type="project" value="UniProtKB-UniRule"/>
</dbReference>
<dbReference type="GO" id="GO:0003746">
    <property type="term" value="F:translation elongation factor activity"/>
    <property type="evidence" value="ECO:0007669"/>
    <property type="project" value="UniProtKB-UniRule"/>
</dbReference>
<dbReference type="GO" id="GO:0045727">
    <property type="term" value="P:positive regulation of translation"/>
    <property type="evidence" value="ECO:0007669"/>
    <property type="project" value="UniProtKB-UniRule"/>
</dbReference>
<dbReference type="CDD" id="cd03699">
    <property type="entry name" value="EF4_II"/>
    <property type="match status" value="1"/>
</dbReference>
<dbReference type="CDD" id="cd16260">
    <property type="entry name" value="EF4_III"/>
    <property type="match status" value="1"/>
</dbReference>
<dbReference type="CDD" id="cd01890">
    <property type="entry name" value="LepA"/>
    <property type="match status" value="1"/>
</dbReference>
<dbReference type="CDD" id="cd03709">
    <property type="entry name" value="lepA_C"/>
    <property type="match status" value="1"/>
</dbReference>
<dbReference type="FunFam" id="3.40.50.300:FF:000078">
    <property type="entry name" value="Elongation factor 4"/>
    <property type="match status" value="1"/>
</dbReference>
<dbReference type="FunFam" id="2.40.30.10:FF:000015">
    <property type="entry name" value="Translation factor GUF1, mitochondrial"/>
    <property type="match status" value="1"/>
</dbReference>
<dbReference type="FunFam" id="3.30.70.240:FF:000007">
    <property type="entry name" value="Translation factor GUF1, mitochondrial"/>
    <property type="match status" value="1"/>
</dbReference>
<dbReference type="FunFam" id="3.30.70.2570:FF:000001">
    <property type="entry name" value="Translation factor GUF1, mitochondrial"/>
    <property type="match status" value="1"/>
</dbReference>
<dbReference type="FunFam" id="3.30.70.870:FF:000004">
    <property type="entry name" value="Translation factor GUF1, mitochondrial"/>
    <property type="match status" value="1"/>
</dbReference>
<dbReference type="Gene3D" id="3.30.70.240">
    <property type="match status" value="1"/>
</dbReference>
<dbReference type="Gene3D" id="3.30.70.2570">
    <property type="entry name" value="Elongation factor 4, C-terminal domain"/>
    <property type="match status" value="1"/>
</dbReference>
<dbReference type="Gene3D" id="3.30.70.870">
    <property type="entry name" value="Elongation Factor G (Translational Gtpase), domain 3"/>
    <property type="match status" value="1"/>
</dbReference>
<dbReference type="Gene3D" id="3.40.50.300">
    <property type="entry name" value="P-loop containing nucleotide triphosphate hydrolases"/>
    <property type="match status" value="1"/>
</dbReference>
<dbReference type="Gene3D" id="2.40.30.10">
    <property type="entry name" value="Translation factors"/>
    <property type="match status" value="1"/>
</dbReference>
<dbReference type="HAMAP" id="MF_00071">
    <property type="entry name" value="LepA"/>
    <property type="match status" value="1"/>
</dbReference>
<dbReference type="InterPro" id="IPR006297">
    <property type="entry name" value="EF-4"/>
</dbReference>
<dbReference type="InterPro" id="IPR035647">
    <property type="entry name" value="EFG_III/V"/>
</dbReference>
<dbReference type="InterPro" id="IPR000640">
    <property type="entry name" value="EFG_V-like"/>
</dbReference>
<dbReference type="InterPro" id="IPR004161">
    <property type="entry name" value="EFTu-like_2"/>
</dbReference>
<dbReference type="InterPro" id="IPR031157">
    <property type="entry name" value="G_TR_CS"/>
</dbReference>
<dbReference type="InterPro" id="IPR038363">
    <property type="entry name" value="LepA_C_sf"/>
</dbReference>
<dbReference type="InterPro" id="IPR013842">
    <property type="entry name" value="LepA_CTD"/>
</dbReference>
<dbReference type="InterPro" id="IPR035654">
    <property type="entry name" value="LepA_IV"/>
</dbReference>
<dbReference type="InterPro" id="IPR027417">
    <property type="entry name" value="P-loop_NTPase"/>
</dbReference>
<dbReference type="InterPro" id="IPR005225">
    <property type="entry name" value="Small_GTP-bd"/>
</dbReference>
<dbReference type="InterPro" id="IPR000795">
    <property type="entry name" value="T_Tr_GTP-bd_dom"/>
</dbReference>
<dbReference type="NCBIfam" id="TIGR01393">
    <property type="entry name" value="lepA"/>
    <property type="match status" value="1"/>
</dbReference>
<dbReference type="NCBIfam" id="TIGR00231">
    <property type="entry name" value="small_GTP"/>
    <property type="match status" value="1"/>
</dbReference>
<dbReference type="PANTHER" id="PTHR43512:SF4">
    <property type="entry name" value="TRANSLATION FACTOR GUF1 HOMOLOG, CHLOROPLASTIC"/>
    <property type="match status" value="1"/>
</dbReference>
<dbReference type="PANTHER" id="PTHR43512">
    <property type="entry name" value="TRANSLATION FACTOR GUF1-RELATED"/>
    <property type="match status" value="1"/>
</dbReference>
<dbReference type="Pfam" id="PF00679">
    <property type="entry name" value="EFG_C"/>
    <property type="match status" value="1"/>
</dbReference>
<dbReference type="Pfam" id="PF00009">
    <property type="entry name" value="GTP_EFTU"/>
    <property type="match status" value="1"/>
</dbReference>
<dbReference type="Pfam" id="PF03144">
    <property type="entry name" value="GTP_EFTU_D2"/>
    <property type="match status" value="1"/>
</dbReference>
<dbReference type="Pfam" id="PF06421">
    <property type="entry name" value="LepA_C"/>
    <property type="match status" value="1"/>
</dbReference>
<dbReference type="PRINTS" id="PR00315">
    <property type="entry name" value="ELONGATNFCT"/>
</dbReference>
<dbReference type="SMART" id="SM00838">
    <property type="entry name" value="EFG_C"/>
    <property type="match status" value="1"/>
</dbReference>
<dbReference type="SUPFAM" id="SSF54980">
    <property type="entry name" value="EF-G C-terminal domain-like"/>
    <property type="match status" value="2"/>
</dbReference>
<dbReference type="SUPFAM" id="SSF52540">
    <property type="entry name" value="P-loop containing nucleoside triphosphate hydrolases"/>
    <property type="match status" value="1"/>
</dbReference>
<dbReference type="PROSITE" id="PS00301">
    <property type="entry name" value="G_TR_1"/>
    <property type="match status" value="1"/>
</dbReference>
<dbReference type="PROSITE" id="PS51722">
    <property type="entry name" value="G_TR_2"/>
    <property type="match status" value="1"/>
</dbReference>
<evidence type="ECO:0000255" key="1">
    <source>
        <dbReference type="HAMAP-Rule" id="MF_00071"/>
    </source>
</evidence>
<protein>
    <recommendedName>
        <fullName evidence="1">Elongation factor 4</fullName>
        <shortName evidence="1">EF-4</shortName>
        <ecNumber evidence="1">3.6.5.n1</ecNumber>
    </recommendedName>
    <alternativeName>
        <fullName evidence="1">Ribosomal back-translocase LepA</fullName>
    </alternativeName>
</protein>
<name>LEPA_RICRO</name>
<accession>B0BWV5</accession>
<reference key="1">
    <citation type="journal article" date="2008" name="Infect. Immun.">
        <title>Genomic comparison of virulent Rickettsia rickettsii Sheila Smith and avirulent Rickettsia rickettsii Iowa.</title>
        <authorList>
            <person name="Ellison D.W."/>
            <person name="Clark T.R."/>
            <person name="Sturdevant D.E."/>
            <person name="Virtaneva K."/>
            <person name="Porcella S.F."/>
            <person name="Hackstadt T."/>
        </authorList>
    </citation>
    <scope>NUCLEOTIDE SEQUENCE [LARGE SCALE GENOMIC DNA]</scope>
    <source>
        <strain>Iowa</strain>
    </source>
</reference>
<sequence>MNHQKYIRNFSIIAHIDHGKSTLADRLIEHCGGLQAREMSQQVLDSMDIEKERGITIKAQTVRLVYKAKDGNTYYLNLMDTPGHVDFAYEVSRSLAACEGSLLVVDSTQGVEAQTLANVYQAIENDHEIVLVLNKLDLPASEPEQVKQQIEDIIGIDTSEAVLISAKSGIGIDLVLEAIVSKLPPPKESSSDILKALLVDSWYDPYLGVVILVRVIDGYLRKNMRIKMMATNSVYTVENVGYFTPKKHISDVLHAGEIGFFTAAIKQVADCKVGDTITDEKKPCEQALPGFKPQLPVVFCGLYPTDSSEFEHLKDSLAKLRLNDASFEYEMESSSALGVGFRCGFLGLLHLEIIQERLSREFNLDLITTAPSVVYKIHMRDGENLEIHNPADLPDLQKIESMEEPWIKATIMVPDEFLGAVLSLCTEKRGMQLDHSYIANRAKIIYKLPLNEIVYDFYDRLKSCSKGYASFEWQMDVYEPSELVKLGILVNAEVVDALSTIVHRSRAEQRGRALCVRLKDLIPRQQIDIAIQASIGSRIIARETIKALRKDVLSKCYGGDISRKRKLLEKQKAGKKRMRQYGNIEIPQSAFIAALKIGDE</sequence>
<gene>
    <name evidence="1" type="primary">lepA</name>
    <name type="ordered locus">RrIowa_0443</name>
</gene>
<comment type="function">
    <text evidence="1">Required for accurate and efficient protein synthesis under certain stress conditions. May act as a fidelity factor of the translation reaction, by catalyzing a one-codon backward translocation of tRNAs on improperly translocated ribosomes. Back-translocation proceeds from a post-translocation (POST) complex to a pre-translocation (PRE) complex, thus giving elongation factor G a second chance to translocate the tRNAs correctly. Binds to ribosomes in a GTP-dependent manner.</text>
</comment>
<comment type="catalytic activity">
    <reaction evidence="1">
        <text>GTP + H2O = GDP + phosphate + H(+)</text>
        <dbReference type="Rhea" id="RHEA:19669"/>
        <dbReference type="ChEBI" id="CHEBI:15377"/>
        <dbReference type="ChEBI" id="CHEBI:15378"/>
        <dbReference type="ChEBI" id="CHEBI:37565"/>
        <dbReference type="ChEBI" id="CHEBI:43474"/>
        <dbReference type="ChEBI" id="CHEBI:58189"/>
        <dbReference type="EC" id="3.6.5.n1"/>
    </reaction>
</comment>
<comment type="subcellular location">
    <subcellularLocation>
        <location evidence="1">Cell inner membrane</location>
        <topology evidence="1">Peripheral membrane protein</topology>
        <orientation evidence="1">Cytoplasmic side</orientation>
    </subcellularLocation>
</comment>
<comment type="similarity">
    <text evidence="1">Belongs to the TRAFAC class translation factor GTPase superfamily. Classic translation factor GTPase family. LepA subfamily.</text>
</comment>
<organism>
    <name type="scientific">Rickettsia rickettsii (strain Iowa)</name>
    <dbReference type="NCBI Taxonomy" id="452659"/>
    <lineage>
        <taxon>Bacteria</taxon>
        <taxon>Pseudomonadati</taxon>
        <taxon>Pseudomonadota</taxon>
        <taxon>Alphaproteobacteria</taxon>
        <taxon>Rickettsiales</taxon>
        <taxon>Rickettsiaceae</taxon>
        <taxon>Rickettsieae</taxon>
        <taxon>Rickettsia</taxon>
        <taxon>spotted fever group</taxon>
    </lineage>
</organism>
<keyword id="KW-0997">Cell inner membrane</keyword>
<keyword id="KW-1003">Cell membrane</keyword>
<keyword id="KW-0342">GTP-binding</keyword>
<keyword id="KW-0378">Hydrolase</keyword>
<keyword id="KW-0472">Membrane</keyword>
<keyword id="KW-0547">Nucleotide-binding</keyword>
<keyword id="KW-0648">Protein biosynthesis</keyword>
<feature type="chain" id="PRO_1000075144" description="Elongation factor 4">
    <location>
        <begin position="1"/>
        <end position="600"/>
    </location>
</feature>
<feature type="domain" description="tr-type G">
    <location>
        <begin position="5"/>
        <end position="187"/>
    </location>
</feature>
<feature type="binding site" evidence="1">
    <location>
        <begin position="17"/>
        <end position="22"/>
    </location>
    <ligand>
        <name>GTP</name>
        <dbReference type="ChEBI" id="CHEBI:37565"/>
    </ligand>
</feature>
<feature type="binding site" evidence="1">
    <location>
        <begin position="134"/>
        <end position="137"/>
    </location>
    <ligand>
        <name>GTP</name>
        <dbReference type="ChEBI" id="CHEBI:37565"/>
    </ligand>
</feature>